<gene>
    <name evidence="1" type="primary">ndk</name>
    <name type="ordered locus">Deide_07830</name>
</gene>
<organism>
    <name type="scientific">Deinococcus deserti (strain DSM 17065 / CIP 109153 / LMG 22923 / VCD115)</name>
    <dbReference type="NCBI Taxonomy" id="546414"/>
    <lineage>
        <taxon>Bacteria</taxon>
        <taxon>Thermotogati</taxon>
        <taxon>Deinococcota</taxon>
        <taxon>Deinococci</taxon>
        <taxon>Deinococcales</taxon>
        <taxon>Deinococcaceae</taxon>
        <taxon>Deinococcus</taxon>
    </lineage>
</organism>
<keyword id="KW-0067">ATP-binding</keyword>
<keyword id="KW-0963">Cytoplasm</keyword>
<keyword id="KW-0418">Kinase</keyword>
<keyword id="KW-0460">Magnesium</keyword>
<keyword id="KW-0479">Metal-binding</keyword>
<keyword id="KW-0546">Nucleotide metabolism</keyword>
<keyword id="KW-0547">Nucleotide-binding</keyword>
<keyword id="KW-0597">Phosphoprotein</keyword>
<keyword id="KW-1185">Reference proteome</keyword>
<keyword id="KW-0808">Transferase</keyword>
<reference key="1">
    <citation type="journal article" date="2009" name="PLoS Genet.">
        <title>Alliance of proteomics and genomics to unravel the specificities of Sahara bacterium Deinococcus deserti.</title>
        <authorList>
            <person name="de Groot A."/>
            <person name="Dulermo R."/>
            <person name="Ortet P."/>
            <person name="Blanchard L."/>
            <person name="Guerin P."/>
            <person name="Fernandez B."/>
            <person name="Vacherie B."/>
            <person name="Dossat C."/>
            <person name="Jolivet E."/>
            <person name="Siguier P."/>
            <person name="Chandler M."/>
            <person name="Barakat M."/>
            <person name="Dedieu A."/>
            <person name="Barbe V."/>
            <person name="Heulin T."/>
            <person name="Sommer S."/>
            <person name="Achouak W."/>
            <person name="Armengaud J."/>
        </authorList>
    </citation>
    <scope>NUCLEOTIDE SEQUENCE [LARGE SCALE GENOMIC DNA]</scope>
    <source>
        <strain>DSM 17065 / CIP 109153 / LMG 22923 / VCD115</strain>
    </source>
</reference>
<accession>C1D1C3</accession>
<evidence type="ECO:0000255" key="1">
    <source>
        <dbReference type="HAMAP-Rule" id="MF_00451"/>
    </source>
</evidence>
<protein>
    <recommendedName>
        <fullName evidence="1">Nucleoside diphosphate kinase</fullName>
        <shortName evidence="1">NDK</shortName>
        <shortName evidence="1">NDP kinase</shortName>
        <ecNumber evidence="1">2.7.4.6</ecNumber>
    </recommendedName>
    <alternativeName>
        <fullName evidence="1">Nucleoside-2-P kinase</fullName>
    </alternativeName>
</protein>
<name>NDK_DEIDV</name>
<feature type="chain" id="PRO_1000206207" description="Nucleoside diphosphate kinase">
    <location>
        <begin position="1"/>
        <end position="138"/>
    </location>
</feature>
<feature type="active site" description="Pros-phosphohistidine intermediate" evidence="1">
    <location>
        <position position="115"/>
    </location>
</feature>
<feature type="binding site" evidence="1">
    <location>
        <position position="9"/>
    </location>
    <ligand>
        <name>ATP</name>
        <dbReference type="ChEBI" id="CHEBI:30616"/>
    </ligand>
</feature>
<feature type="binding site" evidence="1">
    <location>
        <position position="57"/>
    </location>
    <ligand>
        <name>ATP</name>
        <dbReference type="ChEBI" id="CHEBI:30616"/>
    </ligand>
</feature>
<feature type="binding site" evidence="1">
    <location>
        <position position="85"/>
    </location>
    <ligand>
        <name>ATP</name>
        <dbReference type="ChEBI" id="CHEBI:30616"/>
    </ligand>
</feature>
<feature type="binding site" evidence="1">
    <location>
        <position position="91"/>
    </location>
    <ligand>
        <name>ATP</name>
        <dbReference type="ChEBI" id="CHEBI:30616"/>
    </ligand>
</feature>
<feature type="binding site" evidence="1">
    <location>
        <position position="102"/>
    </location>
    <ligand>
        <name>ATP</name>
        <dbReference type="ChEBI" id="CHEBI:30616"/>
    </ligand>
</feature>
<feature type="binding site" evidence="1">
    <location>
        <position position="112"/>
    </location>
    <ligand>
        <name>ATP</name>
        <dbReference type="ChEBI" id="CHEBI:30616"/>
    </ligand>
</feature>
<sequence length="138" mass="14959">MERTFAMIKPDGVRRGLTPEILARIARKGYRVVGLKQMVIARETAENHYGEHRERPFFGELVDFITGGPVVAIALEGENAIAGWRAMMGATNPANAAPGTIRADFATTTGENVTHGSDSAESAQRELALFFQEGELLA</sequence>
<proteinExistence type="inferred from homology"/>
<dbReference type="EC" id="2.7.4.6" evidence="1"/>
<dbReference type="EMBL" id="CP001114">
    <property type="protein sequence ID" value="ACO45647.1"/>
    <property type="molecule type" value="Genomic_DNA"/>
</dbReference>
<dbReference type="RefSeq" id="WP_012692770.1">
    <property type="nucleotide sequence ID" value="NC_012526.1"/>
</dbReference>
<dbReference type="SMR" id="C1D1C3"/>
<dbReference type="STRING" id="546414.Deide_07830"/>
<dbReference type="PaxDb" id="546414-Deide_07830"/>
<dbReference type="KEGG" id="ddr:Deide_07830"/>
<dbReference type="eggNOG" id="COG0105">
    <property type="taxonomic scope" value="Bacteria"/>
</dbReference>
<dbReference type="HOGENOM" id="CLU_060216_6_3_0"/>
<dbReference type="OrthoDB" id="9801161at2"/>
<dbReference type="Proteomes" id="UP000002208">
    <property type="component" value="Chromosome"/>
</dbReference>
<dbReference type="GO" id="GO:0005737">
    <property type="term" value="C:cytoplasm"/>
    <property type="evidence" value="ECO:0007669"/>
    <property type="project" value="UniProtKB-SubCell"/>
</dbReference>
<dbReference type="GO" id="GO:0005524">
    <property type="term" value="F:ATP binding"/>
    <property type="evidence" value="ECO:0007669"/>
    <property type="project" value="UniProtKB-UniRule"/>
</dbReference>
<dbReference type="GO" id="GO:0046872">
    <property type="term" value="F:metal ion binding"/>
    <property type="evidence" value="ECO:0007669"/>
    <property type="project" value="UniProtKB-KW"/>
</dbReference>
<dbReference type="GO" id="GO:0004550">
    <property type="term" value="F:nucleoside diphosphate kinase activity"/>
    <property type="evidence" value="ECO:0007669"/>
    <property type="project" value="UniProtKB-UniRule"/>
</dbReference>
<dbReference type="GO" id="GO:0006241">
    <property type="term" value="P:CTP biosynthetic process"/>
    <property type="evidence" value="ECO:0007669"/>
    <property type="project" value="UniProtKB-UniRule"/>
</dbReference>
<dbReference type="GO" id="GO:0006183">
    <property type="term" value="P:GTP biosynthetic process"/>
    <property type="evidence" value="ECO:0007669"/>
    <property type="project" value="UniProtKB-UniRule"/>
</dbReference>
<dbReference type="GO" id="GO:0006228">
    <property type="term" value="P:UTP biosynthetic process"/>
    <property type="evidence" value="ECO:0007669"/>
    <property type="project" value="UniProtKB-UniRule"/>
</dbReference>
<dbReference type="CDD" id="cd04413">
    <property type="entry name" value="NDPk_I"/>
    <property type="match status" value="1"/>
</dbReference>
<dbReference type="FunFam" id="3.30.70.141:FF:000003">
    <property type="entry name" value="Nucleoside diphosphate kinase"/>
    <property type="match status" value="1"/>
</dbReference>
<dbReference type="Gene3D" id="3.30.70.141">
    <property type="entry name" value="Nucleoside diphosphate kinase-like domain"/>
    <property type="match status" value="1"/>
</dbReference>
<dbReference type="HAMAP" id="MF_00451">
    <property type="entry name" value="NDP_kinase"/>
    <property type="match status" value="1"/>
</dbReference>
<dbReference type="InterPro" id="IPR034907">
    <property type="entry name" value="NDK-like_dom"/>
</dbReference>
<dbReference type="InterPro" id="IPR036850">
    <property type="entry name" value="NDK-like_dom_sf"/>
</dbReference>
<dbReference type="InterPro" id="IPR001564">
    <property type="entry name" value="Nucleoside_diP_kinase"/>
</dbReference>
<dbReference type="NCBIfam" id="NF001908">
    <property type="entry name" value="PRK00668.1"/>
    <property type="match status" value="1"/>
</dbReference>
<dbReference type="PANTHER" id="PTHR11349">
    <property type="entry name" value="NUCLEOSIDE DIPHOSPHATE KINASE"/>
    <property type="match status" value="1"/>
</dbReference>
<dbReference type="Pfam" id="PF00334">
    <property type="entry name" value="NDK"/>
    <property type="match status" value="1"/>
</dbReference>
<dbReference type="PRINTS" id="PR01243">
    <property type="entry name" value="NUCDPKINASE"/>
</dbReference>
<dbReference type="SMART" id="SM00562">
    <property type="entry name" value="NDK"/>
    <property type="match status" value="1"/>
</dbReference>
<dbReference type="SUPFAM" id="SSF54919">
    <property type="entry name" value="Nucleoside diphosphate kinase, NDK"/>
    <property type="match status" value="1"/>
</dbReference>
<dbReference type="PROSITE" id="PS51374">
    <property type="entry name" value="NDPK_LIKE"/>
    <property type="match status" value="1"/>
</dbReference>
<comment type="function">
    <text evidence="1">Major role in the synthesis of nucleoside triphosphates other than ATP. The ATP gamma phosphate is transferred to the NDP beta phosphate via a ping-pong mechanism, using a phosphorylated active-site intermediate.</text>
</comment>
<comment type="catalytic activity">
    <reaction evidence="1">
        <text>a 2'-deoxyribonucleoside 5'-diphosphate + ATP = a 2'-deoxyribonucleoside 5'-triphosphate + ADP</text>
        <dbReference type="Rhea" id="RHEA:44640"/>
        <dbReference type="ChEBI" id="CHEBI:30616"/>
        <dbReference type="ChEBI" id="CHEBI:61560"/>
        <dbReference type="ChEBI" id="CHEBI:73316"/>
        <dbReference type="ChEBI" id="CHEBI:456216"/>
        <dbReference type="EC" id="2.7.4.6"/>
    </reaction>
</comment>
<comment type="catalytic activity">
    <reaction evidence="1">
        <text>a ribonucleoside 5'-diphosphate + ATP = a ribonucleoside 5'-triphosphate + ADP</text>
        <dbReference type="Rhea" id="RHEA:18113"/>
        <dbReference type="ChEBI" id="CHEBI:30616"/>
        <dbReference type="ChEBI" id="CHEBI:57930"/>
        <dbReference type="ChEBI" id="CHEBI:61557"/>
        <dbReference type="ChEBI" id="CHEBI:456216"/>
        <dbReference type="EC" id="2.7.4.6"/>
    </reaction>
</comment>
<comment type="cofactor">
    <cofactor evidence="1">
        <name>Mg(2+)</name>
        <dbReference type="ChEBI" id="CHEBI:18420"/>
    </cofactor>
</comment>
<comment type="subunit">
    <text evidence="1">Homotetramer.</text>
</comment>
<comment type="subcellular location">
    <subcellularLocation>
        <location evidence="1">Cytoplasm</location>
    </subcellularLocation>
</comment>
<comment type="similarity">
    <text evidence="1">Belongs to the NDK family.</text>
</comment>